<feature type="chain" id="PRO_0000277689" description="Methionine import ATP-binding protein MetN 1">
    <location>
        <begin position="1"/>
        <end position="369"/>
    </location>
</feature>
<feature type="domain" description="ABC transporter" evidence="1">
    <location>
        <begin position="29"/>
        <end position="265"/>
    </location>
</feature>
<feature type="region of interest" description="Disordered" evidence="2">
    <location>
        <begin position="1"/>
        <end position="26"/>
    </location>
</feature>
<feature type="binding site" evidence="1">
    <location>
        <begin position="62"/>
        <end position="69"/>
    </location>
    <ligand>
        <name>ATP</name>
        <dbReference type="ChEBI" id="CHEBI:30616"/>
    </ligand>
</feature>
<organism>
    <name type="scientific">Pseudomonas aeruginosa (strain UCBPP-PA14)</name>
    <dbReference type="NCBI Taxonomy" id="208963"/>
    <lineage>
        <taxon>Bacteria</taxon>
        <taxon>Pseudomonadati</taxon>
        <taxon>Pseudomonadota</taxon>
        <taxon>Gammaproteobacteria</taxon>
        <taxon>Pseudomonadales</taxon>
        <taxon>Pseudomonadaceae</taxon>
        <taxon>Pseudomonas</taxon>
    </lineage>
</organism>
<keyword id="KW-0029">Amino-acid transport</keyword>
<keyword id="KW-0067">ATP-binding</keyword>
<keyword id="KW-0997">Cell inner membrane</keyword>
<keyword id="KW-1003">Cell membrane</keyword>
<keyword id="KW-0472">Membrane</keyword>
<keyword id="KW-0547">Nucleotide-binding</keyword>
<keyword id="KW-1278">Translocase</keyword>
<keyword id="KW-0813">Transport</keyword>
<evidence type="ECO:0000255" key="1">
    <source>
        <dbReference type="HAMAP-Rule" id="MF_01719"/>
    </source>
</evidence>
<evidence type="ECO:0000256" key="2">
    <source>
        <dbReference type="SAM" id="MobiDB-lite"/>
    </source>
</evidence>
<protein>
    <recommendedName>
        <fullName evidence="1">Methionine import ATP-binding protein MetN 1</fullName>
        <ecNumber evidence="1">7.4.2.11</ecNumber>
    </recommendedName>
</protein>
<accession>Q02ME3</accession>
<comment type="function">
    <text evidence="1">Part of the ABC transporter complex MetNIQ involved in methionine import. Responsible for energy coupling to the transport system.</text>
</comment>
<comment type="catalytic activity">
    <reaction evidence="1">
        <text>L-methionine(out) + ATP + H2O = L-methionine(in) + ADP + phosphate + H(+)</text>
        <dbReference type="Rhea" id="RHEA:29779"/>
        <dbReference type="ChEBI" id="CHEBI:15377"/>
        <dbReference type="ChEBI" id="CHEBI:15378"/>
        <dbReference type="ChEBI" id="CHEBI:30616"/>
        <dbReference type="ChEBI" id="CHEBI:43474"/>
        <dbReference type="ChEBI" id="CHEBI:57844"/>
        <dbReference type="ChEBI" id="CHEBI:456216"/>
        <dbReference type="EC" id="7.4.2.11"/>
    </reaction>
</comment>
<comment type="catalytic activity">
    <reaction evidence="1">
        <text>D-methionine(out) + ATP + H2O = D-methionine(in) + ADP + phosphate + H(+)</text>
        <dbReference type="Rhea" id="RHEA:29767"/>
        <dbReference type="ChEBI" id="CHEBI:15377"/>
        <dbReference type="ChEBI" id="CHEBI:15378"/>
        <dbReference type="ChEBI" id="CHEBI:30616"/>
        <dbReference type="ChEBI" id="CHEBI:43474"/>
        <dbReference type="ChEBI" id="CHEBI:57932"/>
        <dbReference type="ChEBI" id="CHEBI:456216"/>
        <dbReference type="EC" id="7.4.2.11"/>
    </reaction>
</comment>
<comment type="subunit">
    <text evidence="1">The complex is composed of two ATP-binding proteins (MetN), two transmembrane proteins (MetI) and a solute-binding protein (MetQ).</text>
</comment>
<comment type="subcellular location">
    <subcellularLocation>
        <location evidence="1">Cell inner membrane</location>
        <topology evidence="1">Peripheral membrane protein</topology>
    </subcellularLocation>
</comment>
<comment type="similarity">
    <text evidence="1">Belongs to the ABC transporter superfamily. Methionine importer (TC 3.A.1.24) family.</text>
</comment>
<name>METN1_PSEAB</name>
<proteinExistence type="inferred from homology"/>
<sequence>MTTMTVPPSLLPLEPFPTAPDTRASTPHIRLHGLGKRYPGGVQALREIDLEIRRGEVFGIIGRSGAGKSSLIRTLNRLERPSEGQVLIDGEDIGGYDGQRLVALRRRIGMIFQHFNLMSAKTVRQNIALPLRVAGVPRARIEERVAGLLQLVGLEEKRDAYPAQLSGGQKQRVGIARALVHQPQILLCDEATSALDPESTQAILALLRDINRRLGLTIVLITHEMAVIREICDRVVVLECGRIVEQGEVWEVFGDPRHAVTRSLLGSLRAALPADLQARLRQAPGGGDPVLLDLQYTGASRRVPDLLAIARAIGQRVDLLHGGIERIQGRALGRLLLQVGAPPGELPGVLAKAALVADKVEVLGHVAHA</sequence>
<dbReference type="EC" id="7.4.2.11" evidence="1"/>
<dbReference type="EMBL" id="CP000438">
    <property type="protein sequence ID" value="ABJ11526.1"/>
    <property type="molecule type" value="Genomic_DNA"/>
</dbReference>
<dbReference type="RefSeq" id="WP_003139341.1">
    <property type="nucleotide sequence ID" value="NZ_CP034244.1"/>
</dbReference>
<dbReference type="SMR" id="Q02ME3"/>
<dbReference type="KEGG" id="pau:PA14_34270"/>
<dbReference type="PseudoCAP" id="PA14_34270"/>
<dbReference type="HOGENOM" id="CLU_000604_1_3_6"/>
<dbReference type="BioCyc" id="PAER208963:G1G74-2881-MONOMER"/>
<dbReference type="Proteomes" id="UP000000653">
    <property type="component" value="Chromosome"/>
</dbReference>
<dbReference type="GO" id="GO:0005886">
    <property type="term" value="C:plasma membrane"/>
    <property type="evidence" value="ECO:0007669"/>
    <property type="project" value="UniProtKB-SubCell"/>
</dbReference>
<dbReference type="GO" id="GO:0033232">
    <property type="term" value="F:ABC-type D-methionine transporter activity"/>
    <property type="evidence" value="ECO:0007669"/>
    <property type="project" value="UniProtKB-EC"/>
</dbReference>
<dbReference type="GO" id="GO:0005524">
    <property type="term" value="F:ATP binding"/>
    <property type="evidence" value="ECO:0007669"/>
    <property type="project" value="UniProtKB-KW"/>
</dbReference>
<dbReference type="GO" id="GO:0016887">
    <property type="term" value="F:ATP hydrolysis activity"/>
    <property type="evidence" value="ECO:0007669"/>
    <property type="project" value="InterPro"/>
</dbReference>
<dbReference type="CDD" id="cd03258">
    <property type="entry name" value="ABC_MetN_methionine_transporter"/>
    <property type="match status" value="1"/>
</dbReference>
<dbReference type="FunFam" id="3.40.50.300:FF:000056">
    <property type="entry name" value="Cell division ATP-binding protein FtsE"/>
    <property type="match status" value="1"/>
</dbReference>
<dbReference type="Gene3D" id="3.30.70.260">
    <property type="match status" value="1"/>
</dbReference>
<dbReference type="Gene3D" id="3.40.50.300">
    <property type="entry name" value="P-loop containing nucleotide triphosphate hydrolases"/>
    <property type="match status" value="1"/>
</dbReference>
<dbReference type="InterPro" id="IPR003593">
    <property type="entry name" value="AAA+_ATPase"/>
</dbReference>
<dbReference type="InterPro" id="IPR003439">
    <property type="entry name" value="ABC_transporter-like_ATP-bd"/>
</dbReference>
<dbReference type="InterPro" id="IPR017871">
    <property type="entry name" value="ABC_transporter-like_CS"/>
</dbReference>
<dbReference type="InterPro" id="IPR045865">
    <property type="entry name" value="ACT-like_dom_sf"/>
</dbReference>
<dbReference type="InterPro" id="IPR041701">
    <property type="entry name" value="MetN_ABC"/>
</dbReference>
<dbReference type="InterPro" id="IPR050086">
    <property type="entry name" value="MetN_ABC_transporter-like"/>
</dbReference>
<dbReference type="InterPro" id="IPR018449">
    <property type="entry name" value="NIL_domain"/>
</dbReference>
<dbReference type="InterPro" id="IPR027417">
    <property type="entry name" value="P-loop_NTPase"/>
</dbReference>
<dbReference type="PANTHER" id="PTHR43166">
    <property type="entry name" value="AMINO ACID IMPORT ATP-BINDING PROTEIN"/>
    <property type="match status" value="1"/>
</dbReference>
<dbReference type="PANTHER" id="PTHR43166:SF30">
    <property type="entry name" value="METHIONINE IMPORT ATP-BINDING PROTEIN METN"/>
    <property type="match status" value="1"/>
</dbReference>
<dbReference type="Pfam" id="PF00005">
    <property type="entry name" value="ABC_tran"/>
    <property type="match status" value="1"/>
</dbReference>
<dbReference type="Pfam" id="PF09383">
    <property type="entry name" value="NIL"/>
    <property type="match status" value="1"/>
</dbReference>
<dbReference type="SMART" id="SM00382">
    <property type="entry name" value="AAA"/>
    <property type="match status" value="1"/>
</dbReference>
<dbReference type="SMART" id="SM00930">
    <property type="entry name" value="NIL"/>
    <property type="match status" value="1"/>
</dbReference>
<dbReference type="SUPFAM" id="SSF55021">
    <property type="entry name" value="ACT-like"/>
    <property type="match status" value="1"/>
</dbReference>
<dbReference type="SUPFAM" id="SSF52540">
    <property type="entry name" value="P-loop containing nucleoside triphosphate hydrolases"/>
    <property type="match status" value="1"/>
</dbReference>
<dbReference type="PROSITE" id="PS00211">
    <property type="entry name" value="ABC_TRANSPORTER_1"/>
    <property type="match status" value="1"/>
</dbReference>
<dbReference type="PROSITE" id="PS50893">
    <property type="entry name" value="ABC_TRANSPORTER_2"/>
    <property type="match status" value="1"/>
</dbReference>
<dbReference type="PROSITE" id="PS51264">
    <property type="entry name" value="METN"/>
    <property type="match status" value="1"/>
</dbReference>
<gene>
    <name evidence="1" type="primary">metN1</name>
    <name type="ordered locus">PA14_34270</name>
</gene>
<reference key="1">
    <citation type="journal article" date="2006" name="Genome Biol.">
        <title>Genomic analysis reveals that Pseudomonas aeruginosa virulence is combinatorial.</title>
        <authorList>
            <person name="Lee D.G."/>
            <person name="Urbach J.M."/>
            <person name="Wu G."/>
            <person name="Liberati N.T."/>
            <person name="Feinbaum R.L."/>
            <person name="Miyata S."/>
            <person name="Diggins L.T."/>
            <person name="He J."/>
            <person name="Saucier M."/>
            <person name="Deziel E."/>
            <person name="Friedman L."/>
            <person name="Li L."/>
            <person name="Grills G."/>
            <person name="Montgomery K."/>
            <person name="Kucherlapati R."/>
            <person name="Rahme L.G."/>
            <person name="Ausubel F.M."/>
        </authorList>
    </citation>
    <scope>NUCLEOTIDE SEQUENCE [LARGE SCALE GENOMIC DNA]</scope>
    <source>
        <strain>UCBPP-PA14</strain>
    </source>
</reference>